<protein>
    <recommendedName>
        <fullName evidence="3">Methylthioribose-1-phosphate isomerase</fullName>
        <shortName evidence="3">M1Pi</shortName>
        <shortName evidence="3">MTR-1-P isomerase</shortName>
        <ecNumber evidence="3">5.3.1.23</ecNumber>
    </recommendedName>
    <alternativeName>
        <fullName evidence="3">S-methyl-5-thioribose-1-phosphate isomerase</fullName>
    </alternativeName>
    <alternativeName>
        <fullName evidence="3">Translation initiation factor eIF-2B subunit alpha/beta/delta-like protein</fullName>
    </alternativeName>
</protein>
<keyword id="KW-0007">Acetylation</keyword>
<keyword id="KW-0028">Amino-acid biosynthesis</keyword>
<keyword id="KW-0963">Cytoplasm</keyword>
<keyword id="KW-0413">Isomerase</keyword>
<keyword id="KW-0486">Methionine biosynthesis</keyword>
<keyword id="KW-0488">Methylation</keyword>
<keyword id="KW-0539">Nucleus</keyword>
<keyword id="KW-0597">Phosphoprotein</keyword>
<keyword id="KW-1185">Reference proteome</keyword>
<name>MTNA_RAT</name>
<comment type="function">
    <text evidence="3">Catalyzes the interconversion of methylthioribose-1-phosphate (MTR-1-P) into methylthioribulose-1-phosphate (MTRu-1-P).</text>
</comment>
<comment type="catalytic activity">
    <reaction evidence="3">
        <text>5-(methylsulfanyl)-alpha-D-ribose 1-phosphate = 5-(methylsulfanyl)-D-ribulose 1-phosphate</text>
        <dbReference type="Rhea" id="RHEA:19989"/>
        <dbReference type="ChEBI" id="CHEBI:58533"/>
        <dbReference type="ChEBI" id="CHEBI:58548"/>
        <dbReference type="EC" id="5.3.1.23"/>
    </reaction>
</comment>
<comment type="pathway">
    <text evidence="3">Amino-acid biosynthesis; L-methionine biosynthesis via salvage pathway; L-methionine from S-methyl-5-thio-alpha-D-ribose 1-phosphate: step 1/6.</text>
</comment>
<comment type="subcellular location">
    <subcellularLocation>
        <location evidence="3">Cytoplasm</location>
    </subcellularLocation>
    <subcellularLocation>
        <location evidence="3">Nucleus</location>
    </subcellularLocation>
</comment>
<comment type="similarity">
    <text evidence="3">Belongs to the eIF-2B alpha/beta/delta subunits family. MtnA subfamily.</text>
</comment>
<dbReference type="EC" id="5.3.1.23" evidence="3"/>
<dbReference type="EMBL" id="BC089060">
    <property type="protein sequence ID" value="AAH89060.1"/>
    <property type="molecule type" value="mRNA"/>
</dbReference>
<dbReference type="RefSeq" id="NP_001010947.1">
    <property type="nucleotide sequence ID" value="NM_001010947.2"/>
</dbReference>
<dbReference type="SMR" id="Q5HZE4"/>
<dbReference type="FunCoup" id="Q5HZE4">
    <property type="interactions" value="1933"/>
</dbReference>
<dbReference type="STRING" id="10116.ENSRNOP00000003762"/>
<dbReference type="iPTMnet" id="Q5HZE4"/>
<dbReference type="PhosphoSitePlus" id="Q5HZE4"/>
<dbReference type="jPOST" id="Q5HZE4"/>
<dbReference type="PaxDb" id="10116-ENSRNOP00000003762"/>
<dbReference type="Ensembl" id="ENSRNOT00000003762.7">
    <property type="protein sequence ID" value="ENSRNOP00000003762.4"/>
    <property type="gene ID" value="ENSRNOG00000026211.7"/>
</dbReference>
<dbReference type="GeneID" id="288912"/>
<dbReference type="KEGG" id="rno:288912"/>
<dbReference type="AGR" id="RGD:1307789"/>
<dbReference type="CTD" id="84245"/>
<dbReference type="RGD" id="1307789">
    <property type="gene designation" value="Mri1"/>
</dbReference>
<dbReference type="eggNOG" id="KOG1468">
    <property type="taxonomic scope" value="Eukaryota"/>
</dbReference>
<dbReference type="GeneTree" id="ENSGT00390000013732"/>
<dbReference type="HOGENOM" id="CLU_016218_1_3_1"/>
<dbReference type="InParanoid" id="Q5HZE4"/>
<dbReference type="OMA" id="CETRPLN"/>
<dbReference type="OrthoDB" id="2461at2759"/>
<dbReference type="PhylomeDB" id="Q5HZE4"/>
<dbReference type="TreeFam" id="TF300852"/>
<dbReference type="Reactome" id="R-RNO-1237112">
    <property type="pathway name" value="Methionine salvage pathway"/>
</dbReference>
<dbReference type="UniPathway" id="UPA00904">
    <property type="reaction ID" value="UER00874"/>
</dbReference>
<dbReference type="PRO" id="PR:Q5HZE4"/>
<dbReference type="Proteomes" id="UP000002494">
    <property type="component" value="Chromosome 19"/>
</dbReference>
<dbReference type="Bgee" id="ENSRNOG00000026211">
    <property type="expression patterns" value="Expressed in pancreas and 20 other cell types or tissues"/>
</dbReference>
<dbReference type="GO" id="GO:0005737">
    <property type="term" value="C:cytoplasm"/>
    <property type="evidence" value="ECO:0007669"/>
    <property type="project" value="UniProtKB-SubCell"/>
</dbReference>
<dbReference type="GO" id="GO:0005634">
    <property type="term" value="C:nucleus"/>
    <property type="evidence" value="ECO:0007669"/>
    <property type="project" value="UniProtKB-SubCell"/>
</dbReference>
<dbReference type="GO" id="GO:0042802">
    <property type="term" value="F:identical protein binding"/>
    <property type="evidence" value="ECO:0000266"/>
    <property type="project" value="RGD"/>
</dbReference>
<dbReference type="GO" id="GO:0046523">
    <property type="term" value="F:S-methyl-5-thioribose-1-phosphate isomerase activity"/>
    <property type="evidence" value="ECO:0000318"/>
    <property type="project" value="GO_Central"/>
</dbReference>
<dbReference type="GO" id="GO:0019509">
    <property type="term" value="P:L-methionine salvage from methylthioadenosine"/>
    <property type="evidence" value="ECO:0000318"/>
    <property type="project" value="GO_Central"/>
</dbReference>
<dbReference type="FunFam" id="1.20.120.420:FF:000003">
    <property type="entry name" value="Methylthioribose-1-phosphate isomerase"/>
    <property type="match status" value="1"/>
</dbReference>
<dbReference type="FunFam" id="3.40.50.10470:FF:000003">
    <property type="entry name" value="Methylthioribose-1-phosphate isomerase"/>
    <property type="match status" value="1"/>
</dbReference>
<dbReference type="Gene3D" id="1.20.120.420">
    <property type="entry name" value="translation initiation factor eif-2b, domain 1"/>
    <property type="match status" value="1"/>
</dbReference>
<dbReference type="Gene3D" id="3.40.50.10470">
    <property type="entry name" value="Translation initiation factor eif-2b, domain 2"/>
    <property type="match status" value="1"/>
</dbReference>
<dbReference type="HAMAP" id="MF_01678">
    <property type="entry name" value="Salvage_MtnA"/>
    <property type="match status" value="1"/>
</dbReference>
<dbReference type="InterPro" id="IPR000649">
    <property type="entry name" value="IF-2B-related"/>
</dbReference>
<dbReference type="InterPro" id="IPR005251">
    <property type="entry name" value="IF-M1Pi"/>
</dbReference>
<dbReference type="InterPro" id="IPR042529">
    <property type="entry name" value="IF_2B-like_C"/>
</dbReference>
<dbReference type="InterPro" id="IPR011559">
    <property type="entry name" value="Initiation_fac_2B_a/b/d"/>
</dbReference>
<dbReference type="InterPro" id="IPR027363">
    <property type="entry name" value="M1Pi_N"/>
</dbReference>
<dbReference type="InterPro" id="IPR037171">
    <property type="entry name" value="NagB/RpiA_transferase-like"/>
</dbReference>
<dbReference type="NCBIfam" id="TIGR00524">
    <property type="entry name" value="eIF-2B_rel"/>
    <property type="match status" value="1"/>
</dbReference>
<dbReference type="NCBIfam" id="NF004326">
    <property type="entry name" value="PRK05720.1"/>
    <property type="match status" value="1"/>
</dbReference>
<dbReference type="NCBIfam" id="TIGR00512">
    <property type="entry name" value="salvage_mtnA"/>
    <property type="match status" value="1"/>
</dbReference>
<dbReference type="PANTHER" id="PTHR43475">
    <property type="entry name" value="METHYLTHIORIBOSE-1-PHOSPHATE ISOMERASE"/>
    <property type="match status" value="1"/>
</dbReference>
<dbReference type="PANTHER" id="PTHR43475:SF1">
    <property type="entry name" value="METHYLTHIORIBOSE-1-PHOSPHATE ISOMERASE"/>
    <property type="match status" value="1"/>
</dbReference>
<dbReference type="Pfam" id="PF01008">
    <property type="entry name" value="IF-2B"/>
    <property type="match status" value="1"/>
</dbReference>
<dbReference type="SUPFAM" id="SSF100950">
    <property type="entry name" value="NagB/RpiA/CoA transferase-like"/>
    <property type="match status" value="1"/>
</dbReference>
<organism>
    <name type="scientific">Rattus norvegicus</name>
    <name type="common">Rat</name>
    <dbReference type="NCBI Taxonomy" id="10116"/>
    <lineage>
        <taxon>Eukaryota</taxon>
        <taxon>Metazoa</taxon>
        <taxon>Chordata</taxon>
        <taxon>Craniata</taxon>
        <taxon>Vertebrata</taxon>
        <taxon>Euteleostomi</taxon>
        <taxon>Mammalia</taxon>
        <taxon>Eutheria</taxon>
        <taxon>Euarchontoglires</taxon>
        <taxon>Glires</taxon>
        <taxon>Rodentia</taxon>
        <taxon>Myomorpha</taxon>
        <taxon>Muroidea</taxon>
        <taxon>Muridae</taxon>
        <taxon>Murinae</taxon>
        <taxon>Rattus</taxon>
    </lineage>
</organism>
<feature type="chain" id="PRO_0000317327" description="Methylthioribose-1-phosphate isomerase">
    <location>
        <begin position="1"/>
        <end position="369"/>
    </location>
</feature>
<feature type="active site" description="Proton donor" evidence="3">
    <location>
        <position position="248"/>
    </location>
</feature>
<feature type="site" description="Transition state stabilizer" evidence="3">
    <location>
        <position position="168"/>
    </location>
</feature>
<feature type="modified residue" description="N-acetylmethionine" evidence="1">
    <location>
        <position position="1"/>
    </location>
</feature>
<feature type="modified residue" description="Omega-N-methylarginine" evidence="2">
    <location>
        <position position="158"/>
    </location>
</feature>
<feature type="modified residue" description="Phosphoserine" evidence="4">
    <location>
        <position position="366"/>
    </location>
</feature>
<reference key="1">
    <citation type="journal article" date="2004" name="Genome Res.">
        <title>The status, quality, and expansion of the NIH full-length cDNA project: the Mammalian Gene Collection (MGC).</title>
        <authorList>
            <consortium name="The MGC Project Team"/>
        </authorList>
    </citation>
    <scope>NUCLEOTIDE SEQUENCE [LARGE SCALE MRNA]</scope>
    <source>
        <tissue>Brain</tissue>
    </source>
</reference>
<reference key="2">
    <citation type="journal article" date="2012" name="Nat. Commun.">
        <title>Quantitative maps of protein phosphorylation sites across 14 different rat organs and tissues.</title>
        <authorList>
            <person name="Lundby A."/>
            <person name="Secher A."/>
            <person name="Lage K."/>
            <person name="Nordsborg N.B."/>
            <person name="Dmytriyev A."/>
            <person name="Lundby C."/>
            <person name="Olsen J.V."/>
        </authorList>
    </citation>
    <scope>PHOSPHORYLATION [LARGE SCALE ANALYSIS] AT SER-366</scope>
    <scope>IDENTIFICATION BY MASS SPECTROMETRY [LARGE SCALE ANALYSIS]</scope>
</reference>
<proteinExistence type="evidence at protein level"/>
<gene>
    <name type="primary">Mri1</name>
</gene>
<evidence type="ECO:0000250" key="1">
    <source>
        <dbReference type="UniProtKB" id="Q9BV20"/>
    </source>
</evidence>
<evidence type="ECO:0000250" key="2">
    <source>
        <dbReference type="UniProtKB" id="Q9CQT1"/>
    </source>
</evidence>
<evidence type="ECO:0000255" key="3">
    <source>
        <dbReference type="HAMAP-Rule" id="MF_03119"/>
    </source>
</evidence>
<evidence type="ECO:0007744" key="4">
    <source>
    </source>
</evidence>
<accession>Q5HZE4</accession>
<sequence length="369" mass="39587">MRLEAIRYSPGSLQILDQLQLPEHCHYETLSSVQQAREAIRAMKVRGAPAIALVGCLSLAVELQAGAGGPGLAALVAFVRDQLSLLVAARPTAVNMARAARDLTHMAAREAELEGATEETVRERVIRFAEDMLEKDLKDNRSIGDLGARHLLEQTNPRGGKVTVLTHCNTGALATAGYGTALGVIRSLHEMGRLEHTFCTETRPYNQGARLTAFELVYEKIPATLITDSMAAAAMVHQGVSAVVVGADRVVANGDTANKIGTYQLAIVAKHHGIPFYVAAPSSSCDLRLETGKEIVIEERPSQELTDLNGVRIAAQGIRVWNPAFDVTPHELITGGIITELGVFAPEELRAALSATIFSEGQTLDSPQM</sequence>